<comment type="catalytic activity">
    <reaction evidence="1">
        <text>(6S)-5,6,7,8-tetrahydrofolate + NADP(+) = 7,8-dihydrofolate + NADPH + H(+)</text>
        <dbReference type="Rhea" id="RHEA:15009"/>
        <dbReference type="ChEBI" id="CHEBI:15378"/>
        <dbReference type="ChEBI" id="CHEBI:57451"/>
        <dbReference type="ChEBI" id="CHEBI:57453"/>
        <dbReference type="ChEBI" id="CHEBI:57783"/>
        <dbReference type="ChEBI" id="CHEBI:58349"/>
        <dbReference type="EC" id="1.5.1.3"/>
    </reaction>
</comment>
<comment type="similarity">
    <text evidence="2">Belongs to the dihydrofolate reductase family.</text>
</comment>
<dbReference type="EC" id="1.5.1.3"/>
<dbReference type="EMBL" id="AF148805">
    <property type="protein sequence ID" value="ABD28857.1"/>
    <property type="molecule type" value="Genomic_DNA"/>
</dbReference>
<dbReference type="RefSeq" id="YP_001129359.1">
    <property type="nucleotide sequence ID" value="NC_009333.1"/>
</dbReference>
<dbReference type="SMR" id="Q2HRC6"/>
<dbReference type="BioGRID" id="1776957">
    <property type="interactions" value="8"/>
</dbReference>
<dbReference type="DNASU" id="4961454"/>
<dbReference type="GeneID" id="4961454"/>
<dbReference type="KEGG" id="vg:4961454"/>
<dbReference type="Proteomes" id="UP000000942">
    <property type="component" value="Segment"/>
</dbReference>
<dbReference type="GO" id="GO:0004146">
    <property type="term" value="F:dihydrofolate reductase activity"/>
    <property type="evidence" value="ECO:0007669"/>
    <property type="project" value="UniProtKB-EC"/>
</dbReference>
<dbReference type="GO" id="GO:0050661">
    <property type="term" value="F:NADP binding"/>
    <property type="evidence" value="ECO:0007669"/>
    <property type="project" value="InterPro"/>
</dbReference>
<dbReference type="GO" id="GO:0046452">
    <property type="term" value="P:dihydrofolate metabolic process"/>
    <property type="evidence" value="ECO:0007669"/>
    <property type="project" value="TreeGrafter"/>
</dbReference>
<dbReference type="GO" id="GO:0046655">
    <property type="term" value="P:folic acid metabolic process"/>
    <property type="evidence" value="ECO:0007669"/>
    <property type="project" value="TreeGrafter"/>
</dbReference>
<dbReference type="GO" id="GO:0046654">
    <property type="term" value="P:tetrahydrofolate biosynthetic process"/>
    <property type="evidence" value="ECO:0007669"/>
    <property type="project" value="InterPro"/>
</dbReference>
<dbReference type="CDD" id="cd00209">
    <property type="entry name" value="DHFR"/>
    <property type="match status" value="1"/>
</dbReference>
<dbReference type="Gene3D" id="3.40.430.10">
    <property type="entry name" value="Dihydrofolate Reductase, subunit A"/>
    <property type="match status" value="1"/>
</dbReference>
<dbReference type="InterPro" id="IPR012259">
    <property type="entry name" value="DHFR"/>
</dbReference>
<dbReference type="InterPro" id="IPR024072">
    <property type="entry name" value="DHFR-like_dom_sf"/>
</dbReference>
<dbReference type="InterPro" id="IPR017925">
    <property type="entry name" value="DHFR_CS"/>
</dbReference>
<dbReference type="InterPro" id="IPR001796">
    <property type="entry name" value="DHFR_dom"/>
</dbReference>
<dbReference type="PANTHER" id="PTHR48069">
    <property type="entry name" value="DIHYDROFOLATE REDUCTASE"/>
    <property type="match status" value="1"/>
</dbReference>
<dbReference type="PANTHER" id="PTHR48069:SF6">
    <property type="entry name" value="DIHYDROFOLATE REDUCTASE"/>
    <property type="match status" value="1"/>
</dbReference>
<dbReference type="Pfam" id="PF00186">
    <property type="entry name" value="DHFR_1"/>
    <property type="match status" value="1"/>
</dbReference>
<dbReference type="PRINTS" id="PR00070">
    <property type="entry name" value="DHFR"/>
</dbReference>
<dbReference type="SUPFAM" id="SSF53597">
    <property type="entry name" value="Dihydrofolate reductase-like"/>
    <property type="match status" value="1"/>
</dbReference>
<dbReference type="PROSITE" id="PS00075">
    <property type="entry name" value="DHFR_1"/>
    <property type="match status" value="1"/>
</dbReference>
<dbReference type="PROSITE" id="PS51330">
    <property type="entry name" value="DHFR_2"/>
    <property type="match status" value="1"/>
</dbReference>
<name>DYR_HHV8P</name>
<feature type="chain" id="PRO_0000423810" description="Putative Dihydrofolate reductase">
    <location>
        <begin position="1"/>
        <end position="210"/>
    </location>
</feature>
<feature type="domain" description="DHFR" evidence="1">
    <location>
        <begin position="4"/>
        <end position="184"/>
    </location>
</feature>
<reference key="1">
    <citation type="journal article" date="1999" name="J. Virol.">
        <title>Identification of a spliced gene from Kaposi's sarcoma-associated herpesvirus encoding a protein with similarities to latent membrane proteins 1 and 2A of Epstein-Barr virus.</title>
        <authorList>
            <person name="Glenn M."/>
            <person name="Rainbow L."/>
            <person name="Aurade F."/>
            <person name="Davison A."/>
            <person name="Schulz T.F."/>
        </authorList>
    </citation>
    <scope>NUCLEOTIDE SEQUENCE [LARGE SCALE GENOMIC DNA]</scope>
</reference>
<reference key="2">
    <citation type="journal article" date="2006" name="J. Gen. Virol.">
        <title>Kaposi's sarcoma-associated herpesvirus immune modulation: an overview.</title>
        <authorList>
            <person name="Rezaee S.A.R."/>
            <person name="Cunningham C."/>
            <person name="Davison A.J."/>
            <person name="Blackbourn D.J."/>
        </authorList>
    </citation>
    <scope>NUCLEOTIDE SEQUENCE [LARGE SCALE GENOMIC DNA]</scope>
</reference>
<proteinExistence type="inferred from homology"/>
<gene>
    <name type="primary">ORF2</name>
</gene>
<accession>Q2HRC6</accession>
<protein>
    <recommendedName>
        <fullName>Putative Dihydrofolate reductase</fullName>
        <ecNumber>1.5.1.3</ecNumber>
    </recommendedName>
</protein>
<keyword id="KW-0521">NADP</keyword>
<keyword id="KW-0560">Oxidoreductase</keyword>
<keyword id="KW-1185">Reference proteome</keyword>
<sequence>MDPTLYCVVAVDTKLGIGKNRCLPWPALRGDMRRFRQLTTDCAPGKQNMVVMGRRTWLSIPAGCRPLAGRINVVLSRTLETPPPGAHFLASSLDAALGLARSPELAQQIDKVWVIGGGNLYREALTGPWPVRLFLTRVLHDFACDVFLSHDSLAAYARVNPKPGEQERVFQERGIFYMFETYIKVTQSSDTALPDLERPRPATPPFSETS</sequence>
<evidence type="ECO:0000255" key="1">
    <source>
        <dbReference type="PROSITE-ProRule" id="PRU00660"/>
    </source>
</evidence>
<evidence type="ECO:0000305" key="2"/>
<organism>
    <name type="scientific">Human herpesvirus 8 type P (isolate GK18)</name>
    <name type="common">HHV-8</name>
    <name type="synonym">Kaposi's sarcoma-associated herpesvirus</name>
    <dbReference type="NCBI Taxonomy" id="868565"/>
    <lineage>
        <taxon>Viruses</taxon>
        <taxon>Duplodnaviria</taxon>
        <taxon>Heunggongvirae</taxon>
        <taxon>Peploviricota</taxon>
        <taxon>Herviviricetes</taxon>
        <taxon>Herpesvirales</taxon>
        <taxon>Orthoherpesviridae</taxon>
        <taxon>Gammaherpesvirinae</taxon>
        <taxon>Rhadinovirus</taxon>
        <taxon>Rhadinovirus humangamma8</taxon>
        <taxon>Human herpesvirus 8</taxon>
    </lineage>
</organism>
<organismHost>
    <name type="scientific">Homo sapiens</name>
    <name type="common">Human</name>
    <dbReference type="NCBI Taxonomy" id="9606"/>
</organismHost>